<dbReference type="EC" id="5.1.3.32" evidence="1"/>
<dbReference type="EMBL" id="CP001389">
    <property type="protein sequence ID" value="ACP24047.1"/>
    <property type="molecule type" value="Genomic_DNA"/>
</dbReference>
<dbReference type="RefSeq" id="WP_012706832.1">
    <property type="nucleotide sequence ID" value="NC_012587.1"/>
</dbReference>
<dbReference type="RefSeq" id="YP_002824800.1">
    <property type="nucleotide sequence ID" value="NC_012587.1"/>
</dbReference>
<dbReference type="SMR" id="C3MFZ6"/>
<dbReference type="STRING" id="394.NGR_c02490"/>
<dbReference type="KEGG" id="rhi:NGR_c02490"/>
<dbReference type="PATRIC" id="fig|394.7.peg.3049"/>
<dbReference type="eggNOG" id="COG3254">
    <property type="taxonomic scope" value="Bacteria"/>
</dbReference>
<dbReference type="HOGENOM" id="CLU_100689_2_0_5"/>
<dbReference type="OrthoDB" id="9799608at2"/>
<dbReference type="UniPathway" id="UPA00125"/>
<dbReference type="Proteomes" id="UP000001054">
    <property type="component" value="Chromosome"/>
</dbReference>
<dbReference type="GO" id="GO:0005737">
    <property type="term" value="C:cytoplasm"/>
    <property type="evidence" value="ECO:0007669"/>
    <property type="project" value="UniProtKB-SubCell"/>
</dbReference>
<dbReference type="GO" id="GO:0062192">
    <property type="term" value="F:L-rhamnose mutarotase activity"/>
    <property type="evidence" value="ECO:0007669"/>
    <property type="project" value="UniProtKB-EC"/>
</dbReference>
<dbReference type="GO" id="GO:0019301">
    <property type="term" value="P:rhamnose catabolic process"/>
    <property type="evidence" value="ECO:0007669"/>
    <property type="project" value="TreeGrafter"/>
</dbReference>
<dbReference type="Gene3D" id="3.30.70.100">
    <property type="match status" value="1"/>
</dbReference>
<dbReference type="HAMAP" id="MF_01663">
    <property type="entry name" value="L_rham_rotase"/>
    <property type="match status" value="1"/>
</dbReference>
<dbReference type="InterPro" id="IPR011008">
    <property type="entry name" value="Dimeric_a/b-barrel"/>
</dbReference>
<dbReference type="InterPro" id="IPR013448">
    <property type="entry name" value="L-rhamnose_mutarotase"/>
</dbReference>
<dbReference type="InterPro" id="IPR008000">
    <property type="entry name" value="Rham/fucose_mutarotase"/>
</dbReference>
<dbReference type="NCBIfam" id="TIGR02625">
    <property type="entry name" value="YiiL_rotase"/>
    <property type="match status" value="1"/>
</dbReference>
<dbReference type="PANTHER" id="PTHR34389">
    <property type="entry name" value="L-RHAMNOSE MUTAROTASE"/>
    <property type="match status" value="1"/>
</dbReference>
<dbReference type="PANTHER" id="PTHR34389:SF2">
    <property type="entry name" value="L-RHAMNOSE MUTAROTASE"/>
    <property type="match status" value="1"/>
</dbReference>
<dbReference type="Pfam" id="PF05336">
    <property type="entry name" value="rhaM"/>
    <property type="match status" value="1"/>
</dbReference>
<dbReference type="SUPFAM" id="SSF54909">
    <property type="entry name" value="Dimeric alpha+beta barrel"/>
    <property type="match status" value="1"/>
</dbReference>
<sequence length="104" mass="12132">MEKYAFRMRLNPGMAEEYRARHDAIWPELVTLLKEAGISDYSIHLDEETGLLFGVLWRTENHTMADLPSHPVMQKWWAYMADIMETRADNEPVAVPLKTVFHLS</sequence>
<gene>
    <name evidence="1" type="primary">rhaM</name>
    <name type="ordered locus">NGR_c02490</name>
</gene>
<organism>
    <name type="scientific">Sinorhizobium fredii (strain NBRC 101917 / NGR234)</name>
    <dbReference type="NCBI Taxonomy" id="394"/>
    <lineage>
        <taxon>Bacteria</taxon>
        <taxon>Pseudomonadati</taxon>
        <taxon>Pseudomonadota</taxon>
        <taxon>Alphaproteobacteria</taxon>
        <taxon>Hyphomicrobiales</taxon>
        <taxon>Rhizobiaceae</taxon>
        <taxon>Sinorhizobium/Ensifer group</taxon>
        <taxon>Sinorhizobium</taxon>
    </lineage>
</organism>
<evidence type="ECO:0000255" key="1">
    <source>
        <dbReference type="HAMAP-Rule" id="MF_01663"/>
    </source>
</evidence>
<name>RHAM_SINFN</name>
<comment type="function">
    <text evidence="1">Involved in the anomeric conversion of L-rhamnose.</text>
</comment>
<comment type="catalytic activity">
    <reaction evidence="1">
        <text>alpha-L-rhamnose = beta-L-rhamnose</text>
        <dbReference type="Rhea" id="RHEA:25584"/>
        <dbReference type="ChEBI" id="CHEBI:27586"/>
        <dbReference type="ChEBI" id="CHEBI:27907"/>
        <dbReference type="EC" id="5.1.3.32"/>
    </reaction>
</comment>
<comment type="pathway">
    <text evidence="1">Carbohydrate metabolism; L-rhamnose metabolism.</text>
</comment>
<comment type="subunit">
    <text evidence="1">Homodimer.</text>
</comment>
<comment type="subcellular location">
    <subcellularLocation>
        <location evidence="1">Cytoplasm</location>
    </subcellularLocation>
</comment>
<comment type="similarity">
    <text evidence="1">Belongs to the rhamnose mutarotase family.</text>
</comment>
<proteinExistence type="inferred from homology"/>
<protein>
    <recommendedName>
        <fullName evidence="1">L-rhamnose mutarotase</fullName>
        <ecNumber evidence="1">5.1.3.32</ecNumber>
    </recommendedName>
    <alternativeName>
        <fullName evidence="1">Rhamnose 1-epimerase</fullName>
    </alternativeName>
    <alternativeName>
        <fullName evidence="1">Type-3 mutarotase</fullName>
    </alternativeName>
</protein>
<feature type="chain" id="PRO_1000187224" description="L-rhamnose mutarotase">
    <location>
        <begin position="1"/>
        <end position="104"/>
    </location>
</feature>
<feature type="active site" description="Proton donor" evidence="1">
    <location>
        <position position="22"/>
    </location>
</feature>
<feature type="binding site" evidence="1">
    <location>
        <position position="18"/>
    </location>
    <ligand>
        <name>substrate</name>
    </ligand>
</feature>
<feature type="binding site" evidence="1">
    <location>
        <position position="41"/>
    </location>
    <ligand>
        <name>substrate</name>
    </ligand>
</feature>
<feature type="binding site" evidence="1">
    <location>
        <begin position="76"/>
        <end position="77"/>
    </location>
    <ligand>
        <name>substrate</name>
    </ligand>
</feature>
<keyword id="KW-0119">Carbohydrate metabolism</keyword>
<keyword id="KW-0963">Cytoplasm</keyword>
<keyword id="KW-0413">Isomerase</keyword>
<keyword id="KW-1185">Reference proteome</keyword>
<keyword id="KW-0684">Rhamnose metabolism</keyword>
<reference key="1">
    <citation type="journal article" date="2009" name="Appl. Environ. Microbiol.">
        <title>Rhizobium sp. strain NGR234 possesses a remarkable number of secretion systems.</title>
        <authorList>
            <person name="Schmeisser C."/>
            <person name="Liesegang H."/>
            <person name="Krysciak D."/>
            <person name="Bakkou N."/>
            <person name="Le Quere A."/>
            <person name="Wollherr A."/>
            <person name="Heinemeyer I."/>
            <person name="Morgenstern B."/>
            <person name="Pommerening-Roeser A."/>
            <person name="Flores M."/>
            <person name="Palacios R."/>
            <person name="Brenner S."/>
            <person name="Gottschalk G."/>
            <person name="Schmitz R.A."/>
            <person name="Broughton W.J."/>
            <person name="Perret X."/>
            <person name="Strittmatter A.W."/>
            <person name="Streit W.R."/>
        </authorList>
    </citation>
    <scope>NUCLEOTIDE SEQUENCE [LARGE SCALE GENOMIC DNA]</scope>
    <source>
        <strain>NBRC 101917 / NGR234</strain>
    </source>
</reference>
<accession>C3MFZ6</accession>